<dbReference type="EC" id="1.17.7.4" evidence="1"/>
<dbReference type="EMBL" id="AE013598">
    <property type="protein sequence ID" value="AAW74882.1"/>
    <property type="status" value="ALT_INIT"/>
    <property type="molecule type" value="Genomic_DNA"/>
</dbReference>
<dbReference type="SMR" id="Q5H2D9"/>
<dbReference type="STRING" id="291331.XOO1628"/>
<dbReference type="KEGG" id="xoo:XOO1628"/>
<dbReference type="HOGENOM" id="CLU_027486_1_0_6"/>
<dbReference type="UniPathway" id="UPA00056">
    <property type="reaction ID" value="UER00097"/>
</dbReference>
<dbReference type="UniPathway" id="UPA00059">
    <property type="reaction ID" value="UER00105"/>
</dbReference>
<dbReference type="Proteomes" id="UP000006735">
    <property type="component" value="Chromosome"/>
</dbReference>
<dbReference type="GO" id="GO:0051539">
    <property type="term" value="F:4 iron, 4 sulfur cluster binding"/>
    <property type="evidence" value="ECO:0007669"/>
    <property type="project" value="UniProtKB-UniRule"/>
</dbReference>
<dbReference type="GO" id="GO:0051745">
    <property type="term" value="F:4-hydroxy-3-methylbut-2-enyl diphosphate reductase activity"/>
    <property type="evidence" value="ECO:0007669"/>
    <property type="project" value="UniProtKB-UniRule"/>
</dbReference>
<dbReference type="GO" id="GO:0046872">
    <property type="term" value="F:metal ion binding"/>
    <property type="evidence" value="ECO:0007669"/>
    <property type="project" value="UniProtKB-KW"/>
</dbReference>
<dbReference type="GO" id="GO:0050992">
    <property type="term" value="P:dimethylallyl diphosphate biosynthetic process"/>
    <property type="evidence" value="ECO:0007669"/>
    <property type="project" value="UniProtKB-UniRule"/>
</dbReference>
<dbReference type="GO" id="GO:0019288">
    <property type="term" value="P:isopentenyl diphosphate biosynthetic process, methylerythritol 4-phosphate pathway"/>
    <property type="evidence" value="ECO:0007669"/>
    <property type="project" value="UniProtKB-UniRule"/>
</dbReference>
<dbReference type="GO" id="GO:0016114">
    <property type="term" value="P:terpenoid biosynthetic process"/>
    <property type="evidence" value="ECO:0007669"/>
    <property type="project" value="UniProtKB-UniRule"/>
</dbReference>
<dbReference type="CDD" id="cd13944">
    <property type="entry name" value="lytB_ispH"/>
    <property type="match status" value="1"/>
</dbReference>
<dbReference type="Gene3D" id="3.40.50.11270">
    <property type="match status" value="1"/>
</dbReference>
<dbReference type="Gene3D" id="3.40.1010.20">
    <property type="entry name" value="4-hydroxy-3-methylbut-2-enyl diphosphate reductase, catalytic domain"/>
    <property type="match status" value="2"/>
</dbReference>
<dbReference type="HAMAP" id="MF_00191">
    <property type="entry name" value="IspH"/>
    <property type="match status" value="1"/>
</dbReference>
<dbReference type="InterPro" id="IPR003451">
    <property type="entry name" value="LytB/IspH"/>
</dbReference>
<dbReference type="NCBIfam" id="TIGR00216">
    <property type="entry name" value="ispH_lytB"/>
    <property type="match status" value="1"/>
</dbReference>
<dbReference type="NCBIfam" id="NF002188">
    <property type="entry name" value="PRK01045.1-2"/>
    <property type="match status" value="1"/>
</dbReference>
<dbReference type="NCBIfam" id="NF002190">
    <property type="entry name" value="PRK01045.1-4"/>
    <property type="match status" value="1"/>
</dbReference>
<dbReference type="PANTHER" id="PTHR30426">
    <property type="entry name" value="4-HYDROXY-3-METHYLBUT-2-ENYL DIPHOSPHATE REDUCTASE"/>
    <property type="match status" value="1"/>
</dbReference>
<dbReference type="PANTHER" id="PTHR30426:SF0">
    <property type="entry name" value="4-HYDROXY-3-METHYLBUT-2-ENYL DIPHOSPHATE REDUCTASE"/>
    <property type="match status" value="1"/>
</dbReference>
<dbReference type="Pfam" id="PF02401">
    <property type="entry name" value="LYTB"/>
    <property type="match status" value="1"/>
</dbReference>
<name>ISPH_XANOR</name>
<gene>
    <name evidence="1" type="primary">ispH</name>
    <name type="synonym">lytB</name>
    <name type="ordered locus">XOO1628</name>
</gene>
<protein>
    <recommendedName>
        <fullName evidence="1">4-hydroxy-3-methylbut-2-enyl diphosphate reductase</fullName>
        <shortName evidence="1">HMBPP reductase</shortName>
        <ecNumber evidence="1">1.17.7.4</ecNumber>
    </recommendedName>
</protein>
<proteinExistence type="inferred from homology"/>
<comment type="function">
    <text evidence="1">Catalyzes the conversion of 1-hydroxy-2-methyl-2-(E)-butenyl 4-diphosphate (HMBPP) into a mixture of isopentenyl diphosphate (IPP) and dimethylallyl diphosphate (DMAPP). Acts in the terminal step of the DOXP/MEP pathway for isoprenoid precursor biosynthesis.</text>
</comment>
<comment type="catalytic activity">
    <reaction evidence="1">
        <text>isopentenyl diphosphate + 2 oxidized [2Fe-2S]-[ferredoxin] + H2O = (2E)-4-hydroxy-3-methylbut-2-enyl diphosphate + 2 reduced [2Fe-2S]-[ferredoxin] + 2 H(+)</text>
        <dbReference type="Rhea" id="RHEA:24488"/>
        <dbReference type="Rhea" id="RHEA-COMP:10000"/>
        <dbReference type="Rhea" id="RHEA-COMP:10001"/>
        <dbReference type="ChEBI" id="CHEBI:15377"/>
        <dbReference type="ChEBI" id="CHEBI:15378"/>
        <dbReference type="ChEBI" id="CHEBI:33737"/>
        <dbReference type="ChEBI" id="CHEBI:33738"/>
        <dbReference type="ChEBI" id="CHEBI:128753"/>
        <dbReference type="ChEBI" id="CHEBI:128769"/>
        <dbReference type="EC" id="1.17.7.4"/>
    </reaction>
</comment>
<comment type="catalytic activity">
    <reaction evidence="1">
        <text>dimethylallyl diphosphate + 2 oxidized [2Fe-2S]-[ferredoxin] + H2O = (2E)-4-hydroxy-3-methylbut-2-enyl diphosphate + 2 reduced [2Fe-2S]-[ferredoxin] + 2 H(+)</text>
        <dbReference type="Rhea" id="RHEA:24825"/>
        <dbReference type="Rhea" id="RHEA-COMP:10000"/>
        <dbReference type="Rhea" id="RHEA-COMP:10001"/>
        <dbReference type="ChEBI" id="CHEBI:15377"/>
        <dbReference type="ChEBI" id="CHEBI:15378"/>
        <dbReference type="ChEBI" id="CHEBI:33737"/>
        <dbReference type="ChEBI" id="CHEBI:33738"/>
        <dbReference type="ChEBI" id="CHEBI:57623"/>
        <dbReference type="ChEBI" id="CHEBI:128753"/>
        <dbReference type="EC" id="1.17.7.4"/>
    </reaction>
</comment>
<comment type="cofactor">
    <cofactor evidence="1">
        <name>[4Fe-4S] cluster</name>
        <dbReference type="ChEBI" id="CHEBI:49883"/>
    </cofactor>
    <text evidence="1">Binds 1 [4Fe-4S] cluster per subunit.</text>
</comment>
<comment type="pathway">
    <text evidence="1">Isoprenoid biosynthesis; dimethylallyl diphosphate biosynthesis; dimethylallyl diphosphate from (2E)-4-hydroxy-3-methylbutenyl diphosphate: step 1/1.</text>
</comment>
<comment type="pathway">
    <text evidence="1">Isoprenoid biosynthesis; isopentenyl diphosphate biosynthesis via DXP pathway; isopentenyl diphosphate from 1-deoxy-D-xylulose 5-phosphate: step 6/6.</text>
</comment>
<comment type="similarity">
    <text evidence="1">Belongs to the IspH family.</text>
</comment>
<comment type="sequence caution" evidence="2">
    <conflict type="erroneous initiation">
        <sequence resource="EMBL-CDS" id="AAW74882"/>
    </conflict>
</comment>
<organism>
    <name type="scientific">Xanthomonas oryzae pv. oryzae (strain KACC10331 / KXO85)</name>
    <dbReference type="NCBI Taxonomy" id="291331"/>
    <lineage>
        <taxon>Bacteria</taxon>
        <taxon>Pseudomonadati</taxon>
        <taxon>Pseudomonadota</taxon>
        <taxon>Gammaproteobacteria</taxon>
        <taxon>Lysobacterales</taxon>
        <taxon>Lysobacteraceae</taxon>
        <taxon>Xanthomonas</taxon>
    </lineage>
</organism>
<evidence type="ECO:0000255" key="1">
    <source>
        <dbReference type="HAMAP-Rule" id="MF_00191"/>
    </source>
</evidence>
<evidence type="ECO:0000305" key="2"/>
<feature type="chain" id="PRO_0000128900" description="4-hydroxy-3-methylbut-2-enyl diphosphate reductase">
    <location>
        <begin position="1"/>
        <end position="316"/>
    </location>
</feature>
<feature type="active site" description="Proton donor" evidence="1">
    <location>
        <position position="126"/>
    </location>
</feature>
<feature type="binding site" evidence="1">
    <location>
        <position position="12"/>
    </location>
    <ligand>
        <name>[4Fe-4S] cluster</name>
        <dbReference type="ChEBI" id="CHEBI:49883"/>
    </ligand>
</feature>
<feature type="binding site" evidence="1">
    <location>
        <position position="41"/>
    </location>
    <ligand>
        <name>(2E)-4-hydroxy-3-methylbut-2-enyl diphosphate</name>
        <dbReference type="ChEBI" id="CHEBI:128753"/>
    </ligand>
</feature>
<feature type="binding site" evidence="1">
    <location>
        <position position="41"/>
    </location>
    <ligand>
        <name>dimethylallyl diphosphate</name>
        <dbReference type="ChEBI" id="CHEBI:57623"/>
    </ligand>
</feature>
<feature type="binding site" evidence="1">
    <location>
        <position position="41"/>
    </location>
    <ligand>
        <name>isopentenyl diphosphate</name>
        <dbReference type="ChEBI" id="CHEBI:128769"/>
    </ligand>
</feature>
<feature type="binding site" evidence="1">
    <location>
        <position position="74"/>
    </location>
    <ligand>
        <name>(2E)-4-hydroxy-3-methylbut-2-enyl diphosphate</name>
        <dbReference type="ChEBI" id="CHEBI:128753"/>
    </ligand>
</feature>
<feature type="binding site" evidence="1">
    <location>
        <position position="74"/>
    </location>
    <ligand>
        <name>dimethylallyl diphosphate</name>
        <dbReference type="ChEBI" id="CHEBI:57623"/>
    </ligand>
</feature>
<feature type="binding site" evidence="1">
    <location>
        <position position="74"/>
    </location>
    <ligand>
        <name>isopentenyl diphosphate</name>
        <dbReference type="ChEBI" id="CHEBI:128769"/>
    </ligand>
</feature>
<feature type="binding site" evidence="1">
    <location>
        <position position="96"/>
    </location>
    <ligand>
        <name>[4Fe-4S] cluster</name>
        <dbReference type="ChEBI" id="CHEBI:49883"/>
    </ligand>
</feature>
<feature type="binding site" evidence="1">
    <location>
        <position position="124"/>
    </location>
    <ligand>
        <name>(2E)-4-hydroxy-3-methylbut-2-enyl diphosphate</name>
        <dbReference type="ChEBI" id="CHEBI:128753"/>
    </ligand>
</feature>
<feature type="binding site" evidence="1">
    <location>
        <position position="124"/>
    </location>
    <ligand>
        <name>dimethylallyl diphosphate</name>
        <dbReference type="ChEBI" id="CHEBI:57623"/>
    </ligand>
</feature>
<feature type="binding site" evidence="1">
    <location>
        <position position="124"/>
    </location>
    <ligand>
        <name>isopentenyl diphosphate</name>
        <dbReference type="ChEBI" id="CHEBI:128769"/>
    </ligand>
</feature>
<feature type="binding site" evidence="1">
    <location>
        <position position="169"/>
    </location>
    <ligand>
        <name>(2E)-4-hydroxy-3-methylbut-2-enyl diphosphate</name>
        <dbReference type="ChEBI" id="CHEBI:128753"/>
    </ligand>
</feature>
<feature type="binding site" evidence="1">
    <location>
        <position position="199"/>
    </location>
    <ligand>
        <name>[4Fe-4S] cluster</name>
        <dbReference type="ChEBI" id="CHEBI:49883"/>
    </ligand>
</feature>
<feature type="binding site" evidence="1">
    <location>
        <position position="227"/>
    </location>
    <ligand>
        <name>(2E)-4-hydroxy-3-methylbut-2-enyl diphosphate</name>
        <dbReference type="ChEBI" id="CHEBI:128753"/>
    </ligand>
</feature>
<feature type="binding site" evidence="1">
    <location>
        <position position="227"/>
    </location>
    <ligand>
        <name>dimethylallyl diphosphate</name>
        <dbReference type="ChEBI" id="CHEBI:57623"/>
    </ligand>
</feature>
<feature type="binding site" evidence="1">
    <location>
        <position position="227"/>
    </location>
    <ligand>
        <name>isopentenyl diphosphate</name>
        <dbReference type="ChEBI" id="CHEBI:128769"/>
    </ligand>
</feature>
<feature type="binding site" evidence="1">
    <location>
        <position position="228"/>
    </location>
    <ligand>
        <name>(2E)-4-hydroxy-3-methylbut-2-enyl diphosphate</name>
        <dbReference type="ChEBI" id="CHEBI:128753"/>
    </ligand>
</feature>
<feature type="binding site" evidence="1">
    <location>
        <position position="228"/>
    </location>
    <ligand>
        <name>dimethylallyl diphosphate</name>
        <dbReference type="ChEBI" id="CHEBI:57623"/>
    </ligand>
</feature>
<feature type="binding site" evidence="1">
    <location>
        <position position="228"/>
    </location>
    <ligand>
        <name>isopentenyl diphosphate</name>
        <dbReference type="ChEBI" id="CHEBI:128769"/>
    </ligand>
</feature>
<feature type="binding site" evidence="1">
    <location>
        <position position="229"/>
    </location>
    <ligand>
        <name>(2E)-4-hydroxy-3-methylbut-2-enyl diphosphate</name>
        <dbReference type="ChEBI" id="CHEBI:128753"/>
    </ligand>
</feature>
<feature type="binding site" evidence="1">
    <location>
        <position position="229"/>
    </location>
    <ligand>
        <name>dimethylallyl diphosphate</name>
        <dbReference type="ChEBI" id="CHEBI:57623"/>
    </ligand>
</feature>
<feature type="binding site" evidence="1">
    <location>
        <position position="229"/>
    </location>
    <ligand>
        <name>isopentenyl diphosphate</name>
        <dbReference type="ChEBI" id="CHEBI:128769"/>
    </ligand>
</feature>
<feature type="binding site" evidence="1">
    <location>
        <position position="271"/>
    </location>
    <ligand>
        <name>(2E)-4-hydroxy-3-methylbut-2-enyl diphosphate</name>
        <dbReference type="ChEBI" id="CHEBI:128753"/>
    </ligand>
</feature>
<feature type="binding site" evidence="1">
    <location>
        <position position="271"/>
    </location>
    <ligand>
        <name>dimethylallyl diphosphate</name>
        <dbReference type="ChEBI" id="CHEBI:57623"/>
    </ligand>
</feature>
<feature type="binding site" evidence="1">
    <location>
        <position position="271"/>
    </location>
    <ligand>
        <name>isopentenyl diphosphate</name>
        <dbReference type="ChEBI" id="CHEBI:128769"/>
    </ligand>
</feature>
<reference key="1">
    <citation type="journal article" date="2005" name="Nucleic Acids Res.">
        <title>The genome sequence of Xanthomonas oryzae pathovar oryzae KACC10331, the bacterial blight pathogen of rice.</title>
        <authorList>
            <person name="Lee B.-M."/>
            <person name="Park Y.-J."/>
            <person name="Park D.-S."/>
            <person name="Kang H.-W."/>
            <person name="Kim J.-G."/>
            <person name="Song E.-S."/>
            <person name="Park I.-C."/>
            <person name="Yoon U.-H."/>
            <person name="Hahn J.-H."/>
            <person name="Koo B.-S."/>
            <person name="Lee G.-B."/>
            <person name="Kim H."/>
            <person name="Park H.-S."/>
            <person name="Yoon K.-O."/>
            <person name="Kim J.-H."/>
            <person name="Jung C.-H."/>
            <person name="Koh N.-H."/>
            <person name="Seo J.-S."/>
            <person name="Go S.-J."/>
        </authorList>
    </citation>
    <scope>NUCLEOTIDE SEQUENCE [LARGE SCALE GENOMIC DNA]</scope>
    <source>
        <strain>KACC10331 / KXO85</strain>
    </source>
</reference>
<keyword id="KW-0004">4Fe-4S</keyword>
<keyword id="KW-0408">Iron</keyword>
<keyword id="KW-0411">Iron-sulfur</keyword>
<keyword id="KW-0414">Isoprene biosynthesis</keyword>
<keyword id="KW-0479">Metal-binding</keyword>
<keyword id="KW-0560">Oxidoreductase</keyword>
<keyword id="KW-1185">Reference proteome</keyword>
<sequence>MYVLLANPRGFCAGVDRAIEIVKRAIETLGAPIYVRHEVVHNRFVVDDLKQRGAIFVEELDEVPDDATVIFSAHGVPQAVRQEAERRGLKVFDATCPLVTKVHFEVARHCRAGRDVVLIGHAGHPEVEGTMGQWSRERGPGTIYLVEDIEQVATLDVRQPENLAYTTQTTLSVDDTMGIIEALRARYPAMQGPRHDDICYATQNRQDAVRDLARQCDLVLVVGSPNSSNSNRLSELARRDGVESYLIDNASEIDPAWIVGKQHIGLTAGASAPQVLVDGVLARLRELGASGVSELEGEPESMVFALPKELRLRLVG</sequence>
<accession>Q5H2D9</accession>